<name>PPK1_BURCH</name>
<accession>A0K6D2</accession>
<protein>
    <recommendedName>
        <fullName evidence="1">Polyphosphate kinase</fullName>
        <ecNumber evidence="1">2.7.4.1</ecNumber>
    </recommendedName>
    <alternativeName>
        <fullName evidence="1">ATP-polyphosphate phosphotransferase</fullName>
    </alternativeName>
    <alternativeName>
        <fullName evidence="1">Polyphosphoric acid kinase</fullName>
    </alternativeName>
</protein>
<evidence type="ECO:0000255" key="1">
    <source>
        <dbReference type="HAMAP-Rule" id="MF_00347"/>
    </source>
</evidence>
<proteinExistence type="inferred from homology"/>
<gene>
    <name evidence="1" type="primary">ppk</name>
    <name type="ordered locus">Bcen2424_1307</name>
</gene>
<feature type="chain" id="PRO_1000079354" description="Polyphosphate kinase">
    <location>
        <begin position="1"/>
        <end position="687"/>
    </location>
</feature>
<feature type="active site" description="Phosphohistidine intermediate" evidence="1">
    <location>
        <position position="435"/>
    </location>
</feature>
<feature type="binding site" evidence="1">
    <location>
        <position position="45"/>
    </location>
    <ligand>
        <name>ATP</name>
        <dbReference type="ChEBI" id="CHEBI:30616"/>
    </ligand>
</feature>
<feature type="binding site" evidence="1">
    <location>
        <position position="375"/>
    </location>
    <ligand>
        <name>Mg(2+)</name>
        <dbReference type="ChEBI" id="CHEBI:18420"/>
    </ligand>
</feature>
<feature type="binding site" evidence="1">
    <location>
        <position position="405"/>
    </location>
    <ligand>
        <name>Mg(2+)</name>
        <dbReference type="ChEBI" id="CHEBI:18420"/>
    </ligand>
</feature>
<feature type="binding site" evidence="1">
    <location>
        <position position="472"/>
    </location>
    <ligand>
        <name>ATP</name>
        <dbReference type="ChEBI" id="CHEBI:30616"/>
    </ligand>
</feature>
<feature type="binding site" evidence="1">
    <location>
        <position position="568"/>
    </location>
    <ligand>
        <name>ATP</name>
        <dbReference type="ChEBI" id="CHEBI:30616"/>
    </ligand>
</feature>
<feature type="binding site" evidence="1">
    <location>
        <position position="596"/>
    </location>
    <ligand>
        <name>ATP</name>
        <dbReference type="ChEBI" id="CHEBI:30616"/>
    </ligand>
</feature>
<comment type="function">
    <text evidence="1">Catalyzes the reversible transfer of the terminal phosphate of ATP to form a long-chain polyphosphate (polyP).</text>
</comment>
<comment type="catalytic activity">
    <reaction evidence="1">
        <text>[phosphate](n) + ATP = [phosphate](n+1) + ADP</text>
        <dbReference type="Rhea" id="RHEA:19573"/>
        <dbReference type="Rhea" id="RHEA-COMP:9859"/>
        <dbReference type="Rhea" id="RHEA-COMP:14280"/>
        <dbReference type="ChEBI" id="CHEBI:16838"/>
        <dbReference type="ChEBI" id="CHEBI:30616"/>
        <dbReference type="ChEBI" id="CHEBI:456216"/>
        <dbReference type="EC" id="2.7.4.1"/>
    </reaction>
</comment>
<comment type="cofactor">
    <cofactor evidence="1">
        <name>Mg(2+)</name>
        <dbReference type="ChEBI" id="CHEBI:18420"/>
    </cofactor>
</comment>
<comment type="PTM">
    <text evidence="1">An intermediate of this reaction is the autophosphorylated ppk in which a phosphate is covalently linked to a histidine residue through a N-P bond.</text>
</comment>
<comment type="similarity">
    <text evidence="1">Belongs to the polyphosphate kinase 1 (PPK1) family.</text>
</comment>
<dbReference type="EC" id="2.7.4.1" evidence="1"/>
<dbReference type="EMBL" id="CP000458">
    <property type="protein sequence ID" value="ABK08059.1"/>
    <property type="molecule type" value="Genomic_DNA"/>
</dbReference>
<dbReference type="SMR" id="A0K6D2"/>
<dbReference type="KEGG" id="bch:Bcen2424_1307"/>
<dbReference type="HOGENOM" id="CLU_009678_5_0_4"/>
<dbReference type="GO" id="GO:0009358">
    <property type="term" value="C:polyphosphate kinase complex"/>
    <property type="evidence" value="ECO:0007669"/>
    <property type="project" value="InterPro"/>
</dbReference>
<dbReference type="GO" id="GO:0005524">
    <property type="term" value="F:ATP binding"/>
    <property type="evidence" value="ECO:0007669"/>
    <property type="project" value="UniProtKB-KW"/>
</dbReference>
<dbReference type="GO" id="GO:0046872">
    <property type="term" value="F:metal ion binding"/>
    <property type="evidence" value="ECO:0007669"/>
    <property type="project" value="UniProtKB-KW"/>
</dbReference>
<dbReference type="GO" id="GO:0008976">
    <property type="term" value="F:polyphosphate kinase activity"/>
    <property type="evidence" value="ECO:0007669"/>
    <property type="project" value="UniProtKB-UniRule"/>
</dbReference>
<dbReference type="GO" id="GO:0006799">
    <property type="term" value="P:polyphosphate biosynthetic process"/>
    <property type="evidence" value="ECO:0007669"/>
    <property type="project" value="UniProtKB-UniRule"/>
</dbReference>
<dbReference type="CDD" id="cd09165">
    <property type="entry name" value="PLDc_PaPPK1_C1_like"/>
    <property type="match status" value="1"/>
</dbReference>
<dbReference type="CDD" id="cd09168">
    <property type="entry name" value="PLDc_PaPPK1_C2_like"/>
    <property type="match status" value="1"/>
</dbReference>
<dbReference type="Gene3D" id="3.30.870.10">
    <property type="entry name" value="Endonuclease Chain A"/>
    <property type="match status" value="2"/>
</dbReference>
<dbReference type="Gene3D" id="3.30.1840.10">
    <property type="entry name" value="Polyphosphate kinase middle domain"/>
    <property type="match status" value="1"/>
</dbReference>
<dbReference type="Gene3D" id="1.20.58.310">
    <property type="entry name" value="Polyphosphate kinase N-terminal domain"/>
    <property type="match status" value="1"/>
</dbReference>
<dbReference type="HAMAP" id="MF_00347">
    <property type="entry name" value="Polyphosphate_kinase"/>
    <property type="match status" value="1"/>
</dbReference>
<dbReference type="InterPro" id="IPR003414">
    <property type="entry name" value="PP_kinase"/>
</dbReference>
<dbReference type="InterPro" id="IPR041108">
    <property type="entry name" value="PP_kinase_C_1"/>
</dbReference>
<dbReference type="InterPro" id="IPR024953">
    <property type="entry name" value="PP_kinase_middle"/>
</dbReference>
<dbReference type="InterPro" id="IPR036830">
    <property type="entry name" value="PP_kinase_middle_dom_sf"/>
</dbReference>
<dbReference type="InterPro" id="IPR025200">
    <property type="entry name" value="PPK_C_dom2"/>
</dbReference>
<dbReference type="InterPro" id="IPR025198">
    <property type="entry name" value="PPK_N_dom"/>
</dbReference>
<dbReference type="InterPro" id="IPR036832">
    <property type="entry name" value="PPK_N_dom_sf"/>
</dbReference>
<dbReference type="NCBIfam" id="TIGR03705">
    <property type="entry name" value="poly_P_kin"/>
    <property type="match status" value="1"/>
</dbReference>
<dbReference type="NCBIfam" id="NF003917">
    <property type="entry name" value="PRK05443.1-1"/>
    <property type="match status" value="1"/>
</dbReference>
<dbReference type="NCBIfam" id="NF003918">
    <property type="entry name" value="PRK05443.1-2"/>
    <property type="match status" value="1"/>
</dbReference>
<dbReference type="NCBIfam" id="NF003921">
    <property type="entry name" value="PRK05443.2-2"/>
    <property type="match status" value="1"/>
</dbReference>
<dbReference type="PANTHER" id="PTHR30218">
    <property type="entry name" value="POLYPHOSPHATE KINASE"/>
    <property type="match status" value="1"/>
</dbReference>
<dbReference type="PANTHER" id="PTHR30218:SF0">
    <property type="entry name" value="POLYPHOSPHATE KINASE"/>
    <property type="match status" value="1"/>
</dbReference>
<dbReference type="Pfam" id="PF02503">
    <property type="entry name" value="PP_kinase"/>
    <property type="match status" value="1"/>
</dbReference>
<dbReference type="Pfam" id="PF13090">
    <property type="entry name" value="PP_kinase_C"/>
    <property type="match status" value="1"/>
</dbReference>
<dbReference type="Pfam" id="PF17941">
    <property type="entry name" value="PP_kinase_C_1"/>
    <property type="match status" value="1"/>
</dbReference>
<dbReference type="Pfam" id="PF13089">
    <property type="entry name" value="PP_kinase_N"/>
    <property type="match status" value="1"/>
</dbReference>
<dbReference type="PIRSF" id="PIRSF015589">
    <property type="entry name" value="PP_kinase"/>
    <property type="match status" value="1"/>
</dbReference>
<dbReference type="SUPFAM" id="SSF56024">
    <property type="entry name" value="Phospholipase D/nuclease"/>
    <property type="match status" value="2"/>
</dbReference>
<dbReference type="SUPFAM" id="SSF143724">
    <property type="entry name" value="PHP14-like"/>
    <property type="match status" value="1"/>
</dbReference>
<dbReference type="SUPFAM" id="SSF140356">
    <property type="entry name" value="PPK N-terminal domain-like"/>
    <property type="match status" value="1"/>
</dbReference>
<sequence>MSVRYPLLNRELGILGFNERVLAQAADPQVPLLERLRFICITSSNLDEFFEVRMAGLQEQIRDNPGALTPDGMSLQHAYDLVVERAQRLVHRQYTMLHETVLPALEQEGIYFHASDSWNDEQLEWARRYFLDELLPVLTPIGLDPAHPFPRVLNKSLNFVVELEGRDAFGRQAVMGIVQAPRALPRVVRMPHALSGFEHGFVLLSSFMQRFVGELFPQLVVKSCNQFRITRNSELFVDEDEITNLRVALQGELPARHLGNAVRLEVSADTPLHIVRRLLEESELGDKDCYRVAGSVNLVRLMQIPDLVDRPDLKFTPFTASTPAVIANAPTMFDAIDAGDILLHHPYESFQPVLELLQQAARDPSVVAIKQTIYRTGTDSPLMDALMEAARNGKEVTVVVELLARFDEETNINWASQLEAVGAHVVYGVVGHKCHAKMMLIVRRVVQAGKASLRRYVHLGTGNYHPRTARLYTDFGLMTADQKICEDVHHVFQQLTGIGGELTLHELWQSPFTLHPRIIESIRAEIDNAQAGKRARIVAKMNALLEPSVIAALYEASQAGVKVDLIVRGVCALKPGVPGLSENITVRSIVGRFLEHHRIYYFHAGGAEDVYLSSADWMDRNLFRRVEVAFPIRERKLKRRVIAEGLSVCLGDNQSAWQMHSDGHYRRRRTGKTIRNAQLGLLAKFCS</sequence>
<keyword id="KW-0067">ATP-binding</keyword>
<keyword id="KW-0418">Kinase</keyword>
<keyword id="KW-0460">Magnesium</keyword>
<keyword id="KW-0479">Metal-binding</keyword>
<keyword id="KW-0547">Nucleotide-binding</keyword>
<keyword id="KW-0597">Phosphoprotein</keyword>
<keyword id="KW-0808">Transferase</keyword>
<organism>
    <name type="scientific">Burkholderia cenocepacia (strain HI2424)</name>
    <dbReference type="NCBI Taxonomy" id="331272"/>
    <lineage>
        <taxon>Bacteria</taxon>
        <taxon>Pseudomonadati</taxon>
        <taxon>Pseudomonadota</taxon>
        <taxon>Betaproteobacteria</taxon>
        <taxon>Burkholderiales</taxon>
        <taxon>Burkholderiaceae</taxon>
        <taxon>Burkholderia</taxon>
        <taxon>Burkholderia cepacia complex</taxon>
    </lineage>
</organism>
<reference key="1">
    <citation type="submission" date="2006-08" db="EMBL/GenBank/DDBJ databases">
        <title>Complete sequence of chromosome 1 of Burkholderia cenocepacia HI2424.</title>
        <authorList>
            <person name="Copeland A."/>
            <person name="Lucas S."/>
            <person name="Lapidus A."/>
            <person name="Barry K."/>
            <person name="Detter J.C."/>
            <person name="Glavina del Rio T."/>
            <person name="Hammon N."/>
            <person name="Israni S."/>
            <person name="Pitluck S."/>
            <person name="Chain P."/>
            <person name="Malfatti S."/>
            <person name="Shin M."/>
            <person name="Vergez L."/>
            <person name="Schmutz J."/>
            <person name="Larimer F."/>
            <person name="Land M."/>
            <person name="Hauser L."/>
            <person name="Kyrpides N."/>
            <person name="Kim E."/>
            <person name="LiPuma J.J."/>
            <person name="Gonzalez C.F."/>
            <person name="Konstantinidis K."/>
            <person name="Tiedje J.M."/>
            <person name="Richardson P."/>
        </authorList>
    </citation>
    <scope>NUCLEOTIDE SEQUENCE [LARGE SCALE GENOMIC DNA]</scope>
    <source>
        <strain>HI2424</strain>
    </source>
</reference>